<name>Y616_RHOPA</name>
<feature type="chain" id="PRO_1000003809" description="Nucleoid-associated protein RPA0616">
    <location>
        <begin position="1"/>
        <end position="106"/>
    </location>
</feature>
<dbReference type="EMBL" id="BX572594">
    <property type="protein sequence ID" value="CAE26060.1"/>
    <property type="molecule type" value="Genomic_DNA"/>
</dbReference>
<dbReference type="RefSeq" id="WP_011156184.1">
    <property type="nucleotide sequence ID" value="NZ_CP116810.1"/>
</dbReference>
<dbReference type="SMR" id="Q6NC56"/>
<dbReference type="STRING" id="258594.RPA0616"/>
<dbReference type="GeneID" id="66891637"/>
<dbReference type="eggNOG" id="COG0718">
    <property type="taxonomic scope" value="Bacteria"/>
</dbReference>
<dbReference type="HOGENOM" id="CLU_140930_0_1_5"/>
<dbReference type="PhylomeDB" id="Q6NC56"/>
<dbReference type="GO" id="GO:0043590">
    <property type="term" value="C:bacterial nucleoid"/>
    <property type="evidence" value="ECO:0007669"/>
    <property type="project" value="UniProtKB-UniRule"/>
</dbReference>
<dbReference type="GO" id="GO:0005829">
    <property type="term" value="C:cytosol"/>
    <property type="evidence" value="ECO:0007669"/>
    <property type="project" value="TreeGrafter"/>
</dbReference>
<dbReference type="GO" id="GO:0003677">
    <property type="term" value="F:DNA binding"/>
    <property type="evidence" value="ECO:0007669"/>
    <property type="project" value="UniProtKB-UniRule"/>
</dbReference>
<dbReference type="Gene3D" id="3.30.1310.10">
    <property type="entry name" value="Nucleoid-associated protein YbaB-like domain"/>
    <property type="match status" value="1"/>
</dbReference>
<dbReference type="HAMAP" id="MF_00274">
    <property type="entry name" value="DNA_YbaB_EbfC"/>
    <property type="match status" value="1"/>
</dbReference>
<dbReference type="InterPro" id="IPR036894">
    <property type="entry name" value="YbaB-like_sf"/>
</dbReference>
<dbReference type="InterPro" id="IPR004401">
    <property type="entry name" value="YbaB/EbfC"/>
</dbReference>
<dbReference type="NCBIfam" id="TIGR00103">
    <property type="entry name" value="DNA_YbaB_EbfC"/>
    <property type="match status" value="1"/>
</dbReference>
<dbReference type="PANTHER" id="PTHR33449">
    <property type="entry name" value="NUCLEOID-ASSOCIATED PROTEIN YBAB"/>
    <property type="match status" value="1"/>
</dbReference>
<dbReference type="PANTHER" id="PTHR33449:SF1">
    <property type="entry name" value="NUCLEOID-ASSOCIATED PROTEIN YBAB"/>
    <property type="match status" value="1"/>
</dbReference>
<dbReference type="Pfam" id="PF02575">
    <property type="entry name" value="YbaB_DNA_bd"/>
    <property type="match status" value="1"/>
</dbReference>
<dbReference type="PIRSF" id="PIRSF004555">
    <property type="entry name" value="UCP004555"/>
    <property type="match status" value="1"/>
</dbReference>
<dbReference type="SUPFAM" id="SSF82607">
    <property type="entry name" value="YbaB-like"/>
    <property type="match status" value="1"/>
</dbReference>
<evidence type="ECO:0000255" key="1">
    <source>
        <dbReference type="HAMAP-Rule" id="MF_00274"/>
    </source>
</evidence>
<accession>Q6NC56</accession>
<protein>
    <recommendedName>
        <fullName evidence="1">Nucleoid-associated protein RPA0616</fullName>
    </recommendedName>
</protein>
<comment type="function">
    <text evidence="1">Binds to DNA and alters its conformation. May be involved in regulation of gene expression, nucleoid organization and DNA protection.</text>
</comment>
<comment type="subunit">
    <text evidence="1">Homodimer.</text>
</comment>
<comment type="subcellular location">
    <subcellularLocation>
        <location evidence="1">Cytoplasm</location>
        <location evidence="1">Nucleoid</location>
    </subcellularLocation>
</comment>
<comment type="similarity">
    <text evidence="1">Belongs to the YbaB/EbfC family.</text>
</comment>
<proteinExistence type="inferred from homology"/>
<keyword id="KW-0963">Cytoplasm</keyword>
<keyword id="KW-0238">DNA-binding</keyword>
<organism>
    <name type="scientific">Rhodopseudomonas palustris (strain ATCC BAA-98 / CGA009)</name>
    <dbReference type="NCBI Taxonomy" id="258594"/>
    <lineage>
        <taxon>Bacteria</taxon>
        <taxon>Pseudomonadati</taxon>
        <taxon>Pseudomonadota</taxon>
        <taxon>Alphaproteobacteria</taxon>
        <taxon>Hyphomicrobiales</taxon>
        <taxon>Nitrobacteraceae</taxon>
        <taxon>Rhodopseudomonas</taxon>
    </lineage>
</organism>
<reference key="1">
    <citation type="journal article" date="2004" name="Nat. Biotechnol.">
        <title>Complete genome sequence of the metabolically versatile photosynthetic bacterium Rhodopseudomonas palustris.</title>
        <authorList>
            <person name="Larimer F.W."/>
            <person name="Chain P."/>
            <person name="Hauser L."/>
            <person name="Lamerdin J.E."/>
            <person name="Malfatti S."/>
            <person name="Do L."/>
            <person name="Land M.L."/>
            <person name="Pelletier D.A."/>
            <person name="Beatty J.T."/>
            <person name="Lang A.S."/>
            <person name="Tabita F.R."/>
            <person name="Gibson J.L."/>
            <person name="Hanson T.E."/>
            <person name="Bobst C."/>
            <person name="Torres y Torres J.L."/>
            <person name="Peres C."/>
            <person name="Harrison F.H."/>
            <person name="Gibson J."/>
            <person name="Harwood C.S."/>
        </authorList>
    </citation>
    <scope>NUCLEOTIDE SEQUENCE [LARGE SCALE GENOMIC DNA]</scope>
    <source>
        <strain>ATCC BAA-98 / CGA009</strain>
    </source>
</reference>
<sequence length="106" mass="11188">MADFLGMMKQAAQLQSKMKAMQAELDQIEVEGLSGGGLVKVRMSAKMEVRGISIDPSLIKADEREVLEDLLAAAHGDAHRKAEAAMQEKMQALTGGLGLPPGLGLG</sequence>
<gene>
    <name type="ordered locus">RPA0616</name>
</gene>